<feature type="chain" id="PRO_1000078478" description="Large ribosomal subunit protein bL36">
    <location>
        <begin position="1"/>
        <end position="37"/>
    </location>
</feature>
<reference key="1">
    <citation type="journal article" date="2008" name="Genome Res.">
        <title>The genome of Pelotomaculum thermopropionicum reveals niche-associated evolution in anaerobic microbiota.</title>
        <authorList>
            <person name="Kosaka T."/>
            <person name="Kato S."/>
            <person name="Shimoyama T."/>
            <person name="Ishii S."/>
            <person name="Abe T."/>
            <person name="Watanabe K."/>
        </authorList>
    </citation>
    <scope>NUCLEOTIDE SEQUENCE [LARGE SCALE GENOMIC DNA]</scope>
    <source>
        <strain>DSM 13744 / JCM 10971 / SI</strain>
    </source>
</reference>
<comment type="similarity">
    <text evidence="1">Belongs to the bacterial ribosomal protein bL36 family.</text>
</comment>
<proteinExistence type="inferred from homology"/>
<accession>A5D5E4</accession>
<evidence type="ECO:0000255" key="1">
    <source>
        <dbReference type="HAMAP-Rule" id="MF_00251"/>
    </source>
</evidence>
<evidence type="ECO:0000305" key="2"/>
<dbReference type="EMBL" id="AP009389">
    <property type="protein sequence ID" value="BAF58525.1"/>
    <property type="molecule type" value="Genomic_DNA"/>
</dbReference>
<dbReference type="SMR" id="A5D5E4"/>
<dbReference type="STRING" id="370438.PTH_0344"/>
<dbReference type="KEGG" id="pth:PTH_0344"/>
<dbReference type="eggNOG" id="COG0257">
    <property type="taxonomic scope" value="Bacteria"/>
</dbReference>
<dbReference type="HOGENOM" id="CLU_135723_6_2_9"/>
<dbReference type="Proteomes" id="UP000006556">
    <property type="component" value="Chromosome"/>
</dbReference>
<dbReference type="GO" id="GO:0005737">
    <property type="term" value="C:cytoplasm"/>
    <property type="evidence" value="ECO:0007669"/>
    <property type="project" value="UniProtKB-ARBA"/>
</dbReference>
<dbReference type="GO" id="GO:1990904">
    <property type="term" value="C:ribonucleoprotein complex"/>
    <property type="evidence" value="ECO:0007669"/>
    <property type="project" value="UniProtKB-KW"/>
</dbReference>
<dbReference type="GO" id="GO:0005840">
    <property type="term" value="C:ribosome"/>
    <property type="evidence" value="ECO:0007669"/>
    <property type="project" value="UniProtKB-KW"/>
</dbReference>
<dbReference type="GO" id="GO:0003735">
    <property type="term" value="F:structural constituent of ribosome"/>
    <property type="evidence" value="ECO:0007669"/>
    <property type="project" value="InterPro"/>
</dbReference>
<dbReference type="GO" id="GO:0006412">
    <property type="term" value="P:translation"/>
    <property type="evidence" value="ECO:0007669"/>
    <property type="project" value="UniProtKB-UniRule"/>
</dbReference>
<dbReference type="HAMAP" id="MF_00251">
    <property type="entry name" value="Ribosomal_bL36"/>
    <property type="match status" value="1"/>
</dbReference>
<dbReference type="InterPro" id="IPR000473">
    <property type="entry name" value="Ribosomal_bL36"/>
</dbReference>
<dbReference type="InterPro" id="IPR035977">
    <property type="entry name" value="Ribosomal_bL36_sp"/>
</dbReference>
<dbReference type="NCBIfam" id="TIGR01022">
    <property type="entry name" value="rpmJ_bact"/>
    <property type="match status" value="1"/>
</dbReference>
<dbReference type="PANTHER" id="PTHR42888">
    <property type="entry name" value="50S RIBOSOMAL PROTEIN L36, CHLOROPLASTIC"/>
    <property type="match status" value="1"/>
</dbReference>
<dbReference type="PANTHER" id="PTHR42888:SF1">
    <property type="entry name" value="LARGE RIBOSOMAL SUBUNIT PROTEIN BL36C"/>
    <property type="match status" value="1"/>
</dbReference>
<dbReference type="Pfam" id="PF00444">
    <property type="entry name" value="Ribosomal_L36"/>
    <property type="match status" value="1"/>
</dbReference>
<dbReference type="SUPFAM" id="SSF57840">
    <property type="entry name" value="Ribosomal protein L36"/>
    <property type="match status" value="1"/>
</dbReference>
<dbReference type="PROSITE" id="PS00828">
    <property type="entry name" value="RIBOSOMAL_L36"/>
    <property type="match status" value="1"/>
</dbReference>
<sequence length="37" mass="4304">MKVRPSVKPICEKCKIIRRKGRIMVICENPKHKQAQG</sequence>
<organism>
    <name type="scientific">Pelotomaculum thermopropionicum (strain DSM 13744 / JCM 10971 / SI)</name>
    <dbReference type="NCBI Taxonomy" id="370438"/>
    <lineage>
        <taxon>Bacteria</taxon>
        <taxon>Bacillati</taxon>
        <taxon>Bacillota</taxon>
        <taxon>Clostridia</taxon>
        <taxon>Eubacteriales</taxon>
        <taxon>Desulfotomaculaceae</taxon>
        <taxon>Pelotomaculum</taxon>
    </lineage>
</organism>
<name>RL36_PELTS</name>
<gene>
    <name evidence="1" type="primary">rpmJ</name>
    <name type="ordered locus">PTH_0344</name>
</gene>
<protein>
    <recommendedName>
        <fullName evidence="1">Large ribosomal subunit protein bL36</fullName>
    </recommendedName>
    <alternativeName>
        <fullName evidence="2">50S ribosomal protein L36</fullName>
    </alternativeName>
</protein>
<keyword id="KW-1185">Reference proteome</keyword>
<keyword id="KW-0687">Ribonucleoprotein</keyword>
<keyword id="KW-0689">Ribosomal protein</keyword>